<gene>
    <name evidence="3" type="primary">iboH</name>
    <name type="ORF">M378DRAFT_172437</name>
</gene>
<keyword id="KW-0223">Dioxygenase</keyword>
<keyword id="KW-0408">Iron</keyword>
<keyword id="KW-0479">Metal-binding</keyword>
<keyword id="KW-0560">Oxidoreductase</keyword>
<keyword id="KW-1185">Reference proteome</keyword>
<feature type="chain" id="PRO_0000454915" description="2-oxoglutarate-dependent dioxygenase iboH">
    <location>
        <begin position="1"/>
        <end position="206"/>
    </location>
</feature>
<feature type="domain" description="Fe2OG dioxygenase" evidence="1">
    <location>
        <begin position="51"/>
        <end position="157"/>
    </location>
</feature>
<feature type="binding site" evidence="1">
    <location>
        <position position="75"/>
    </location>
    <ligand>
        <name>Fe cation</name>
        <dbReference type="ChEBI" id="CHEBI:24875"/>
    </ligand>
</feature>
<feature type="binding site" evidence="1">
    <location>
        <position position="77"/>
    </location>
    <ligand>
        <name>Fe cation</name>
        <dbReference type="ChEBI" id="CHEBI:24875"/>
    </ligand>
</feature>
<feature type="binding site" evidence="1">
    <location>
        <position position="134"/>
    </location>
    <ligand>
        <name>Fe cation</name>
        <dbReference type="ChEBI" id="CHEBI:24875"/>
    </ligand>
</feature>
<feature type="binding site" evidence="1">
    <location>
        <position position="148"/>
    </location>
    <ligand>
        <name>2-oxoglutarate</name>
        <dbReference type="ChEBI" id="CHEBI:16810"/>
    </ligand>
</feature>
<dbReference type="EC" id="1.14.11.76" evidence="2"/>
<dbReference type="EMBL" id="KN818402">
    <property type="protein sequence ID" value="KIL56739.1"/>
    <property type="molecule type" value="Genomic_DNA"/>
</dbReference>
<dbReference type="SMR" id="A0A0C2SRU5"/>
<dbReference type="STRING" id="946122.A0A0C2SRU5"/>
<dbReference type="KEGG" id="ag:KIL56739"/>
<dbReference type="HOGENOM" id="CLU_110772_0_0_1"/>
<dbReference type="InParanoid" id="A0A0C2SRU5"/>
<dbReference type="OrthoDB" id="406156at2759"/>
<dbReference type="BioCyc" id="MetaCyc:MONOMER-21258"/>
<dbReference type="BRENDA" id="1.14.11.76">
    <property type="organism ID" value="7508"/>
</dbReference>
<dbReference type="Proteomes" id="UP000054549">
    <property type="component" value="Unassembled WGS sequence"/>
</dbReference>
<dbReference type="GO" id="GO:0051213">
    <property type="term" value="F:dioxygenase activity"/>
    <property type="evidence" value="ECO:0007669"/>
    <property type="project" value="UniProtKB-KW"/>
</dbReference>
<dbReference type="GO" id="GO:0046872">
    <property type="term" value="F:metal ion binding"/>
    <property type="evidence" value="ECO:0007669"/>
    <property type="project" value="UniProtKB-KW"/>
</dbReference>
<dbReference type="Gene3D" id="2.60.120.330">
    <property type="entry name" value="B-lactam Antibiotic, Isopenicillin N Synthase, Chain"/>
    <property type="match status" value="1"/>
</dbReference>
<dbReference type="InterPro" id="IPR044861">
    <property type="entry name" value="IPNS-like_FE2OG_OXY"/>
</dbReference>
<dbReference type="InterPro" id="IPR027443">
    <property type="entry name" value="IPNS-like_sf"/>
</dbReference>
<dbReference type="InterPro" id="IPR050231">
    <property type="entry name" value="Iron_ascorbate_oxido_reductase"/>
</dbReference>
<dbReference type="InterPro" id="IPR005123">
    <property type="entry name" value="Oxoglu/Fe-dep_dioxygenase_dom"/>
</dbReference>
<dbReference type="PANTHER" id="PTHR47990">
    <property type="entry name" value="2-OXOGLUTARATE (2OG) AND FE(II)-DEPENDENT OXYGENASE SUPERFAMILY PROTEIN-RELATED"/>
    <property type="match status" value="1"/>
</dbReference>
<dbReference type="Pfam" id="PF03171">
    <property type="entry name" value="2OG-FeII_Oxy"/>
    <property type="match status" value="1"/>
</dbReference>
<dbReference type="SUPFAM" id="SSF51197">
    <property type="entry name" value="Clavaminate synthase-like"/>
    <property type="match status" value="1"/>
</dbReference>
<dbReference type="PROSITE" id="PS51471">
    <property type="entry name" value="FE2OG_OXY"/>
    <property type="match status" value="1"/>
</dbReference>
<proteinExistence type="evidence at protein level"/>
<sequence length="206" mass="23686">MPPTIRNNFPLFHDFVTASHFITQTILMRLSDAMYLEGSTRFENSHREDKPSTTTLVLLHYPKNFDNAHSGHNKHTDIGSLTLLFTPQWGLQLLSPIQKSKSWLWVQPRPGHAVINVGDSLRFLSGKRLKSCLHRVYPTGEVYQEEDRYSIAYFLRPESAANFEDVDGKVVSAKRWHDEKYVTYTEPHEKQDLSNILTGGMDQILA</sequence>
<reference key="1">
    <citation type="journal article" date="2015" name="Nat. Genet.">
        <title>Convergent losses of decay mechanisms and rapid turnover of symbiosis genes in mycorrhizal mutualists.</title>
        <authorList>
            <consortium name="Mycorrhizal Genomics Initiative Consortium"/>
            <person name="Kohler A."/>
            <person name="Kuo A."/>
            <person name="Nagy L.G."/>
            <person name="Morin E."/>
            <person name="Barry K.W."/>
            <person name="Buscot F."/>
            <person name="Canbaeck B."/>
            <person name="Choi C."/>
            <person name="Cichocki N."/>
            <person name="Clum A."/>
            <person name="Colpaert J."/>
            <person name="Copeland A."/>
            <person name="Costa M.D."/>
            <person name="Dore J."/>
            <person name="Floudas D."/>
            <person name="Gay G."/>
            <person name="Girlanda M."/>
            <person name="Henrissat B."/>
            <person name="Herrmann S."/>
            <person name="Hess J."/>
            <person name="Hoegberg N."/>
            <person name="Johansson T."/>
            <person name="Khouja H.R."/>
            <person name="LaButti K."/>
            <person name="Lahrmann U."/>
            <person name="Levasseur A."/>
            <person name="Lindquist E.A."/>
            <person name="Lipzen A."/>
            <person name="Marmeisse R."/>
            <person name="Martino E."/>
            <person name="Murat C."/>
            <person name="Ngan C.Y."/>
            <person name="Nehls U."/>
            <person name="Plett J.M."/>
            <person name="Pringle A."/>
            <person name="Ohm R.A."/>
            <person name="Perotto S."/>
            <person name="Peter M."/>
            <person name="Riley R."/>
            <person name="Rineau F."/>
            <person name="Ruytinx J."/>
            <person name="Salamov A."/>
            <person name="Shah F."/>
            <person name="Sun H."/>
            <person name="Tarkka M."/>
            <person name="Tritt A."/>
            <person name="Veneault-Fourrey C."/>
            <person name="Zuccaro A."/>
            <person name="Tunlid A."/>
            <person name="Grigoriev I.V."/>
            <person name="Hibbett D.S."/>
            <person name="Martin F."/>
        </authorList>
    </citation>
    <scope>NUCLEOTIDE SEQUENCE [LARGE SCALE GENOMIC DNA]</scope>
    <source>
        <strain>Koide BX008</strain>
    </source>
</reference>
<reference key="2">
    <citation type="journal article" date="2020" name="Angew. Chem. Int. Ed.">
        <title>Ibotenic acid biosynthesis in the fly agaric is initiated by glutamate hydroxylation.</title>
        <authorList>
            <person name="Obermaier S."/>
            <person name="Mueller M."/>
        </authorList>
    </citation>
    <scope>FUNCTION</scope>
    <scope>CATALYTIC ACTIVITY</scope>
    <scope>INDUCTION</scope>
    <scope>PATHWAY</scope>
</reference>
<name>IBOH_AMAMK</name>
<protein>
    <recommendedName>
        <fullName evidence="3">2-oxoglutarate-dependent dioxygenase iboH</fullName>
        <ecNumber evidence="2">1.14.11.76</ecNumber>
    </recommendedName>
    <alternativeName>
        <fullName evidence="3">Ibotenic acid biosynthesis cluster protein H</fullName>
    </alternativeName>
</protein>
<accession>A0A0C2SRU5</accession>
<organism>
    <name type="scientific">Amanita muscaria (strain Koide BX008)</name>
    <dbReference type="NCBI Taxonomy" id="946122"/>
    <lineage>
        <taxon>Eukaryota</taxon>
        <taxon>Fungi</taxon>
        <taxon>Dikarya</taxon>
        <taxon>Basidiomycota</taxon>
        <taxon>Agaricomycotina</taxon>
        <taxon>Agaricomycetes</taxon>
        <taxon>Agaricomycetidae</taxon>
        <taxon>Agaricales</taxon>
        <taxon>Pluteineae</taxon>
        <taxon>Amanitaceae</taxon>
        <taxon>Amanita</taxon>
    </lineage>
</organism>
<comment type="function">
    <text evidence="2 5">2-oxoglutarate-dependent dioxygenase; part of the gene cluster that mediates the biosynthesis of the psychoactive metabolites ibotenic acid and muscimol (PubMed:32233056). The first committed step is glutamate hydroxylation by the 2-oxoglutarate-dependent dioxygenase iboH, and the last step is decarboxylation of ibotenic acid to muscimol by the decarboxylase iboD (PubMed:32233056). The order of the intermediate reactions is somewhat ambiguous (Probable). IboA likely activates the carboxylic acid at position 5 to introduce an amide bond, and the flavin monooxygenase iboF generates the N-O bond (Probable). There are several options for the latter step (Probable). One option is that iboF directly hydroxylates the amide nitrogen formed by iboA to produce a hydroxamic acid species (Probable). Another option is that iboF hydroxylates an external N-containing compound, whose resulting N-O bond is subsequently introduced into the hydroxyglutamate scaffold (Probable). The paralogous PLP-dependent cystathionine gamma-synthase-like enzymes iboG1 and iboG2 are likely involved in substitution of the OH group at position 3 by the O-N moiety (Probable). The first cyclic intermediate is most probably tricholomic acid which is likely desaturated to ibotenic acid by the cytochrome P450 monooxygenase iboC (Probable).</text>
</comment>
<comment type="catalytic activity">
    <reaction evidence="2">
        <text>L-glutamate + 2-oxoglutarate + O2 = (3R)-3-hydroxy-L-glutamate + succinate + CO2</text>
        <dbReference type="Rhea" id="RHEA:65752"/>
        <dbReference type="ChEBI" id="CHEBI:15379"/>
        <dbReference type="ChEBI" id="CHEBI:16526"/>
        <dbReference type="ChEBI" id="CHEBI:16810"/>
        <dbReference type="ChEBI" id="CHEBI:29985"/>
        <dbReference type="ChEBI" id="CHEBI:30031"/>
        <dbReference type="ChEBI" id="CHEBI:155841"/>
        <dbReference type="EC" id="1.14.11.76"/>
    </reaction>
    <physiologicalReaction direction="left-to-right" evidence="2">
        <dbReference type="Rhea" id="RHEA:65753"/>
    </physiologicalReaction>
</comment>
<comment type="cofactor">
    <cofactor evidence="1">
        <name>Fe(2+)</name>
        <dbReference type="ChEBI" id="CHEBI:29033"/>
    </cofactor>
    <text evidence="1">Binds 1 Fe(2+) ion per subunit.</text>
</comment>
<comment type="pathway">
    <text evidence="2">Secondary metabolite biosynthesis.</text>
</comment>
<comment type="induction">
    <text evidence="2">Expression is highly induced during artificial growth in symbiosis with Populus, which is close to its natural condition.</text>
</comment>
<comment type="similarity">
    <text evidence="4">Belongs to the iron/ascorbate-dependent oxidoreductase family.</text>
</comment>
<evidence type="ECO:0000255" key="1">
    <source>
        <dbReference type="PROSITE-ProRule" id="PRU00805"/>
    </source>
</evidence>
<evidence type="ECO:0000269" key="2">
    <source>
    </source>
</evidence>
<evidence type="ECO:0000303" key="3">
    <source>
    </source>
</evidence>
<evidence type="ECO:0000305" key="4"/>
<evidence type="ECO:0000305" key="5">
    <source>
    </source>
</evidence>